<gene>
    <name evidence="1" type="primary">ispD</name>
    <name type="ordered locus">Bxeno_A2120</name>
    <name type="ORF">Bxe_A2312</name>
</gene>
<keyword id="KW-0414">Isoprene biosynthesis</keyword>
<keyword id="KW-0548">Nucleotidyltransferase</keyword>
<keyword id="KW-1185">Reference proteome</keyword>
<keyword id="KW-0808">Transferase</keyword>
<feature type="chain" id="PRO_1000022910" description="2-C-methyl-D-erythritol 4-phosphate cytidylyltransferase">
    <location>
        <begin position="1"/>
        <end position="237"/>
    </location>
</feature>
<feature type="site" description="Transition state stabilizer" evidence="1">
    <location>
        <position position="17"/>
    </location>
</feature>
<feature type="site" description="Transition state stabilizer" evidence="1">
    <location>
        <position position="24"/>
    </location>
</feature>
<feature type="site" description="Positions MEP for the nucleophilic attack" evidence="1">
    <location>
        <position position="161"/>
    </location>
</feature>
<feature type="site" description="Positions MEP for the nucleophilic attack" evidence="1">
    <location>
        <position position="217"/>
    </location>
</feature>
<protein>
    <recommendedName>
        <fullName evidence="1">2-C-methyl-D-erythritol 4-phosphate cytidylyltransferase</fullName>
        <ecNumber evidence="1">2.7.7.60</ecNumber>
    </recommendedName>
    <alternativeName>
        <fullName evidence="1">4-diphosphocytidyl-2C-methyl-D-erythritol synthase</fullName>
    </alternativeName>
    <alternativeName>
        <fullName evidence="1">MEP cytidylyltransferase</fullName>
        <shortName evidence="1">MCT</shortName>
    </alternativeName>
</protein>
<reference key="1">
    <citation type="journal article" date="2006" name="Proc. Natl. Acad. Sci. U.S.A.">
        <title>Burkholderia xenovorans LB400 harbors a multi-replicon, 9.73-Mbp genome shaped for versatility.</title>
        <authorList>
            <person name="Chain P.S.G."/>
            <person name="Denef V.J."/>
            <person name="Konstantinidis K.T."/>
            <person name="Vergez L.M."/>
            <person name="Agullo L."/>
            <person name="Reyes V.L."/>
            <person name="Hauser L."/>
            <person name="Cordova M."/>
            <person name="Gomez L."/>
            <person name="Gonzalez M."/>
            <person name="Land M."/>
            <person name="Lao V."/>
            <person name="Larimer F."/>
            <person name="LiPuma J.J."/>
            <person name="Mahenthiralingam E."/>
            <person name="Malfatti S.A."/>
            <person name="Marx C.J."/>
            <person name="Parnell J.J."/>
            <person name="Ramette A."/>
            <person name="Richardson P."/>
            <person name="Seeger M."/>
            <person name="Smith D."/>
            <person name="Spilker T."/>
            <person name="Sul W.J."/>
            <person name="Tsoi T.V."/>
            <person name="Ulrich L.E."/>
            <person name="Zhulin I.B."/>
            <person name="Tiedje J.M."/>
        </authorList>
    </citation>
    <scope>NUCLEOTIDE SEQUENCE [LARGE SCALE GENOMIC DNA]</scope>
    <source>
        <strain>LB400</strain>
    </source>
</reference>
<organism>
    <name type="scientific">Paraburkholderia xenovorans (strain LB400)</name>
    <dbReference type="NCBI Taxonomy" id="266265"/>
    <lineage>
        <taxon>Bacteria</taxon>
        <taxon>Pseudomonadati</taxon>
        <taxon>Pseudomonadota</taxon>
        <taxon>Betaproteobacteria</taxon>
        <taxon>Burkholderiales</taxon>
        <taxon>Burkholderiaceae</taxon>
        <taxon>Paraburkholderia</taxon>
    </lineage>
</organism>
<evidence type="ECO:0000255" key="1">
    <source>
        <dbReference type="HAMAP-Rule" id="MF_00108"/>
    </source>
</evidence>
<name>ISPD_PARXL</name>
<comment type="function">
    <text evidence="1">Catalyzes the formation of 4-diphosphocytidyl-2-C-methyl-D-erythritol from CTP and 2-C-methyl-D-erythritol 4-phosphate (MEP).</text>
</comment>
<comment type="catalytic activity">
    <reaction evidence="1">
        <text>2-C-methyl-D-erythritol 4-phosphate + CTP + H(+) = 4-CDP-2-C-methyl-D-erythritol + diphosphate</text>
        <dbReference type="Rhea" id="RHEA:13429"/>
        <dbReference type="ChEBI" id="CHEBI:15378"/>
        <dbReference type="ChEBI" id="CHEBI:33019"/>
        <dbReference type="ChEBI" id="CHEBI:37563"/>
        <dbReference type="ChEBI" id="CHEBI:57823"/>
        <dbReference type="ChEBI" id="CHEBI:58262"/>
        <dbReference type="EC" id="2.7.7.60"/>
    </reaction>
</comment>
<comment type="pathway">
    <text evidence="1">Isoprenoid biosynthesis; isopentenyl diphosphate biosynthesis via DXP pathway; isopentenyl diphosphate from 1-deoxy-D-xylulose 5-phosphate: step 2/6.</text>
</comment>
<comment type="similarity">
    <text evidence="1">Belongs to the IspD/TarI cytidylyltransferase family. IspD subfamily.</text>
</comment>
<accession>Q13Z31</accession>
<proteinExistence type="inferred from homology"/>
<dbReference type="EC" id="2.7.7.60" evidence="1"/>
<dbReference type="EMBL" id="CP000270">
    <property type="protein sequence ID" value="ABE30658.1"/>
    <property type="molecule type" value="Genomic_DNA"/>
</dbReference>
<dbReference type="RefSeq" id="WP_011488289.1">
    <property type="nucleotide sequence ID" value="NC_007951.1"/>
</dbReference>
<dbReference type="SMR" id="Q13Z31"/>
<dbReference type="STRING" id="266265.Bxe_A2312"/>
<dbReference type="KEGG" id="bxe:Bxe_A2312"/>
<dbReference type="PATRIC" id="fig|266265.5.peg.2220"/>
<dbReference type="eggNOG" id="COG1211">
    <property type="taxonomic scope" value="Bacteria"/>
</dbReference>
<dbReference type="OrthoDB" id="9806837at2"/>
<dbReference type="UniPathway" id="UPA00056">
    <property type="reaction ID" value="UER00093"/>
</dbReference>
<dbReference type="Proteomes" id="UP000001817">
    <property type="component" value="Chromosome 1"/>
</dbReference>
<dbReference type="GO" id="GO:0050518">
    <property type="term" value="F:2-C-methyl-D-erythritol 4-phosphate cytidylyltransferase activity"/>
    <property type="evidence" value="ECO:0007669"/>
    <property type="project" value="UniProtKB-UniRule"/>
</dbReference>
<dbReference type="GO" id="GO:0019288">
    <property type="term" value="P:isopentenyl diphosphate biosynthetic process, methylerythritol 4-phosphate pathway"/>
    <property type="evidence" value="ECO:0007669"/>
    <property type="project" value="UniProtKB-UniRule"/>
</dbReference>
<dbReference type="CDD" id="cd02516">
    <property type="entry name" value="CDP-ME_synthetase"/>
    <property type="match status" value="1"/>
</dbReference>
<dbReference type="FunFam" id="3.90.550.10:FF:000003">
    <property type="entry name" value="2-C-methyl-D-erythritol 4-phosphate cytidylyltransferase"/>
    <property type="match status" value="1"/>
</dbReference>
<dbReference type="Gene3D" id="3.90.550.10">
    <property type="entry name" value="Spore Coat Polysaccharide Biosynthesis Protein SpsA, Chain A"/>
    <property type="match status" value="1"/>
</dbReference>
<dbReference type="HAMAP" id="MF_00108">
    <property type="entry name" value="IspD"/>
    <property type="match status" value="1"/>
</dbReference>
<dbReference type="InterPro" id="IPR001228">
    <property type="entry name" value="IspD"/>
</dbReference>
<dbReference type="InterPro" id="IPR034683">
    <property type="entry name" value="IspD/TarI"/>
</dbReference>
<dbReference type="InterPro" id="IPR050088">
    <property type="entry name" value="IspD/TarI_cytidylyltransf_bact"/>
</dbReference>
<dbReference type="InterPro" id="IPR018294">
    <property type="entry name" value="ISPD_synthase_CS"/>
</dbReference>
<dbReference type="InterPro" id="IPR029044">
    <property type="entry name" value="Nucleotide-diphossugar_trans"/>
</dbReference>
<dbReference type="NCBIfam" id="TIGR00453">
    <property type="entry name" value="ispD"/>
    <property type="match status" value="1"/>
</dbReference>
<dbReference type="PANTHER" id="PTHR32125">
    <property type="entry name" value="2-C-METHYL-D-ERYTHRITOL 4-PHOSPHATE CYTIDYLYLTRANSFERASE, CHLOROPLASTIC"/>
    <property type="match status" value="1"/>
</dbReference>
<dbReference type="PANTHER" id="PTHR32125:SF4">
    <property type="entry name" value="2-C-METHYL-D-ERYTHRITOL 4-PHOSPHATE CYTIDYLYLTRANSFERASE, CHLOROPLASTIC"/>
    <property type="match status" value="1"/>
</dbReference>
<dbReference type="Pfam" id="PF01128">
    <property type="entry name" value="IspD"/>
    <property type="match status" value="1"/>
</dbReference>
<dbReference type="SUPFAM" id="SSF53448">
    <property type="entry name" value="Nucleotide-diphospho-sugar transferases"/>
    <property type="match status" value="1"/>
</dbReference>
<dbReference type="PROSITE" id="PS01295">
    <property type="entry name" value="ISPD"/>
    <property type="match status" value="1"/>
</dbReference>
<sequence>MTSRLFALIPCAGTGSRSGAAMPKQYRTVAGRDMLHFSLAAFDACSEFAQTLVVIAPDDAHFDARRFGGLRFAVRRSGGASRQASVLNGLHALAEFGAHDDDWVLVHDAARPGITPALIRTLVGALKDDTVGGIMALPVADTLKRIDANSADGRIARTEARDGLWQAQTPQMFRIGMLRAAILRAQADGHDLTDEASAIEWLGHAPKLVQGSLRNFKVTYPEDFDLAEAILSRPAVS</sequence>